<sequence>MSVVPVADVLQGRVAVDSEVTVRGWVRTRRDSKAGISFLAVYDGSCFDPVQAVINNSLPNYNEDVLRLTTGCSVIVTGKVVASPGQGQQFEIQASKVEVAGWVEDPDTYPMAAKRHSIEYLREVAHLRPRTNLIGAVARVRHTLAQALHRFFNEQGFFWVSTPLITASDTEGAGEMFRVSTLDLENLPRNDQGKVDFDKDFFGKESFLTVSGQLNGETYACALSKIYTFGPTFRAENSNTSRHLAEFWMLEPEVAFANLNDIAGLAEAMLKYVFKAVLEERADDMKFFAERVDKDAVSRLERFIEADFAQVDYTDAVTILENCGRKFENPVYWGVDLSSEHERYLAEEHFKAPVVVKNYPKDIKAFYMRLNEDGKTVAAMDVLAPGIGEIIGGSQREERLDVLDERMLEMGLNKEDYWWYRDLRRYGTVPHSGFGLGFERLIAYVTGVQNVRDVIPFPRTPRNASF</sequence>
<comment type="catalytic activity">
    <reaction evidence="1">
        <text>tRNA(Asn) + L-asparagine + ATP = L-asparaginyl-tRNA(Asn) + AMP + diphosphate + H(+)</text>
        <dbReference type="Rhea" id="RHEA:11180"/>
        <dbReference type="Rhea" id="RHEA-COMP:9659"/>
        <dbReference type="Rhea" id="RHEA-COMP:9674"/>
        <dbReference type="ChEBI" id="CHEBI:15378"/>
        <dbReference type="ChEBI" id="CHEBI:30616"/>
        <dbReference type="ChEBI" id="CHEBI:33019"/>
        <dbReference type="ChEBI" id="CHEBI:58048"/>
        <dbReference type="ChEBI" id="CHEBI:78442"/>
        <dbReference type="ChEBI" id="CHEBI:78515"/>
        <dbReference type="ChEBI" id="CHEBI:456215"/>
        <dbReference type="EC" id="6.1.1.22"/>
    </reaction>
</comment>
<comment type="subunit">
    <text evidence="1">Homodimer.</text>
</comment>
<comment type="subcellular location">
    <subcellularLocation>
        <location evidence="1">Cytoplasm</location>
    </subcellularLocation>
</comment>
<comment type="similarity">
    <text evidence="1">Belongs to the class-II aminoacyl-tRNA synthetase family.</text>
</comment>
<name>SYN_ECOL5</name>
<gene>
    <name evidence="1" type="primary">asnS</name>
    <name type="ordered locus">ECP_0941</name>
</gene>
<proteinExistence type="inferred from homology"/>
<keyword id="KW-0030">Aminoacyl-tRNA synthetase</keyword>
<keyword id="KW-0067">ATP-binding</keyword>
<keyword id="KW-0963">Cytoplasm</keyword>
<keyword id="KW-0436">Ligase</keyword>
<keyword id="KW-0547">Nucleotide-binding</keyword>
<keyword id="KW-0648">Protein biosynthesis</keyword>
<organism>
    <name type="scientific">Escherichia coli O6:K15:H31 (strain 536 / UPEC)</name>
    <dbReference type="NCBI Taxonomy" id="362663"/>
    <lineage>
        <taxon>Bacteria</taxon>
        <taxon>Pseudomonadati</taxon>
        <taxon>Pseudomonadota</taxon>
        <taxon>Gammaproteobacteria</taxon>
        <taxon>Enterobacterales</taxon>
        <taxon>Enterobacteriaceae</taxon>
        <taxon>Escherichia</taxon>
    </lineage>
</organism>
<accession>Q0TJC3</accession>
<reference key="1">
    <citation type="journal article" date="2006" name="Mol. Microbiol.">
        <title>Role of pathogenicity island-associated integrases in the genome plasticity of uropathogenic Escherichia coli strain 536.</title>
        <authorList>
            <person name="Hochhut B."/>
            <person name="Wilde C."/>
            <person name="Balling G."/>
            <person name="Middendorf B."/>
            <person name="Dobrindt U."/>
            <person name="Brzuszkiewicz E."/>
            <person name="Gottschalk G."/>
            <person name="Carniel E."/>
            <person name="Hacker J."/>
        </authorList>
    </citation>
    <scope>NUCLEOTIDE SEQUENCE [LARGE SCALE GENOMIC DNA]</scope>
    <source>
        <strain>536 / UPEC</strain>
    </source>
</reference>
<evidence type="ECO:0000255" key="1">
    <source>
        <dbReference type="HAMAP-Rule" id="MF_00534"/>
    </source>
</evidence>
<dbReference type="EC" id="6.1.1.22" evidence="1"/>
<dbReference type="EMBL" id="CP000247">
    <property type="protein sequence ID" value="ABG68956.1"/>
    <property type="molecule type" value="Genomic_DNA"/>
</dbReference>
<dbReference type="RefSeq" id="WP_000117881.1">
    <property type="nucleotide sequence ID" value="NC_008253.1"/>
</dbReference>
<dbReference type="SMR" id="Q0TJC3"/>
<dbReference type="GeneID" id="93776484"/>
<dbReference type="KEGG" id="ecp:ECP_0941"/>
<dbReference type="HOGENOM" id="CLU_004553_2_0_6"/>
<dbReference type="Proteomes" id="UP000009182">
    <property type="component" value="Chromosome"/>
</dbReference>
<dbReference type="GO" id="GO:0005737">
    <property type="term" value="C:cytoplasm"/>
    <property type="evidence" value="ECO:0007669"/>
    <property type="project" value="UniProtKB-SubCell"/>
</dbReference>
<dbReference type="GO" id="GO:0004816">
    <property type="term" value="F:asparagine-tRNA ligase activity"/>
    <property type="evidence" value="ECO:0007669"/>
    <property type="project" value="UniProtKB-UniRule"/>
</dbReference>
<dbReference type="GO" id="GO:0005524">
    <property type="term" value="F:ATP binding"/>
    <property type="evidence" value="ECO:0007669"/>
    <property type="project" value="UniProtKB-UniRule"/>
</dbReference>
<dbReference type="GO" id="GO:0003676">
    <property type="term" value="F:nucleic acid binding"/>
    <property type="evidence" value="ECO:0007669"/>
    <property type="project" value="InterPro"/>
</dbReference>
<dbReference type="GO" id="GO:0006421">
    <property type="term" value="P:asparaginyl-tRNA aminoacylation"/>
    <property type="evidence" value="ECO:0007669"/>
    <property type="project" value="UniProtKB-UniRule"/>
</dbReference>
<dbReference type="CDD" id="cd00776">
    <property type="entry name" value="AsxRS_core"/>
    <property type="match status" value="1"/>
</dbReference>
<dbReference type="CDD" id="cd04318">
    <property type="entry name" value="EcAsnRS_like_N"/>
    <property type="match status" value="1"/>
</dbReference>
<dbReference type="FunFam" id="2.40.50.140:FF:000116">
    <property type="entry name" value="Asparagine--tRNA ligase"/>
    <property type="match status" value="1"/>
</dbReference>
<dbReference type="FunFam" id="3.30.930.10:FF:000016">
    <property type="entry name" value="Asparagine--tRNA ligase"/>
    <property type="match status" value="1"/>
</dbReference>
<dbReference type="Gene3D" id="3.30.930.10">
    <property type="entry name" value="Bira Bifunctional Protein, Domain 2"/>
    <property type="match status" value="1"/>
</dbReference>
<dbReference type="Gene3D" id="2.40.50.140">
    <property type="entry name" value="Nucleic acid-binding proteins"/>
    <property type="match status" value="1"/>
</dbReference>
<dbReference type="HAMAP" id="MF_00534">
    <property type="entry name" value="Asn_tRNA_synth"/>
    <property type="match status" value="1"/>
</dbReference>
<dbReference type="InterPro" id="IPR004364">
    <property type="entry name" value="Aa-tRNA-synt_II"/>
</dbReference>
<dbReference type="InterPro" id="IPR006195">
    <property type="entry name" value="aa-tRNA-synth_II"/>
</dbReference>
<dbReference type="InterPro" id="IPR045864">
    <property type="entry name" value="aa-tRNA-synth_II/BPL/LPL"/>
</dbReference>
<dbReference type="InterPro" id="IPR004522">
    <property type="entry name" value="Asn-tRNA-ligase"/>
</dbReference>
<dbReference type="InterPro" id="IPR002312">
    <property type="entry name" value="Asp/Asn-tRNA-synth_IIb"/>
</dbReference>
<dbReference type="InterPro" id="IPR012340">
    <property type="entry name" value="NA-bd_OB-fold"/>
</dbReference>
<dbReference type="InterPro" id="IPR004365">
    <property type="entry name" value="NA-bd_OB_tRNA"/>
</dbReference>
<dbReference type="NCBIfam" id="TIGR00457">
    <property type="entry name" value="asnS"/>
    <property type="match status" value="1"/>
</dbReference>
<dbReference type="NCBIfam" id="NF003037">
    <property type="entry name" value="PRK03932.1"/>
    <property type="match status" value="1"/>
</dbReference>
<dbReference type="PANTHER" id="PTHR22594:SF34">
    <property type="entry name" value="ASPARAGINE--TRNA LIGASE, MITOCHONDRIAL-RELATED"/>
    <property type="match status" value="1"/>
</dbReference>
<dbReference type="PANTHER" id="PTHR22594">
    <property type="entry name" value="ASPARTYL/LYSYL-TRNA SYNTHETASE"/>
    <property type="match status" value="1"/>
</dbReference>
<dbReference type="Pfam" id="PF00152">
    <property type="entry name" value="tRNA-synt_2"/>
    <property type="match status" value="1"/>
</dbReference>
<dbReference type="Pfam" id="PF01336">
    <property type="entry name" value="tRNA_anti-codon"/>
    <property type="match status" value="1"/>
</dbReference>
<dbReference type="PRINTS" id="PR01042">
    <property type="entry name" value="TRNASYNTHASP"/>
</dbReference>
<dbReference type="SUPFAM" id="SSF55681">
    <property type="entry name" value="Class II aaRS and biotin synthetases"/>
    <property type="match status" value="1"/>
</dbReference>
<dbReference type="SUPFAM" id="SSF50249">
    <property type="entry name" value="Nucleic acid-binding proteins"/>
    <property type="match status" value="1"/>
</dbReference>
<dbReference type="PROSITE" id="PS50862">
    <property type="entry name" value="AA_TRNA_LIGASE_II"/>
    <property type="match status" value="1"/>
</dbReference>
<protein>
    <recommendedName>
        <fullName evidence="1">Asparagine--tRNA ligase</fullName>
        <ecNumber evidence="1">6.1.1.22</ecNumber>
    </recommendedName>
    <alternativeName>
        <fullName evidence="1">Asparaginyl-tRNA synthetase</fullName>
        <shortName evidence="1">AsnRS</shortName>
    </alternativeName>
</protein>
<feature type="chain" id="PRO_1000051392" description="Asparagine--tRNA ligase">
    <location>
        <begin position="1"/>
        <end position="466"/>
    </location>
</feature>